<evidence type="ECO:0000255" key="1"/>
<evidence type="ECO:0000255" key="2">
    <source>
        <dbReference type="PROSITE-ProRule" id="PRU01164"/>
    </source>
</evidence>
<evidence type="ECO:0000305" key="3"/>
<protein>
    <recommendedName>
        <fullName>Protein psiJ</fullName>
    </recommendedName>
</protein>
<organism>
    <name type="scientific">Dictyostelium discoideum</name>
    <name type="common">Social amoeba</name>
    <dbReference type="NCBI Taxonomy" id="44689"/>
    <lineage>
        <taxon>Eukaryota</taxon>
        <taxon>Amoebozoa</taxon>
        <taxon>Evosea</taxon>
        <taxon>Eumycetozoa</taxon>
        <taxon>Dictyostelia</taxon>
        <taxon>Dictyosteliales</taxon>
        <taxon>Dictyosteliaceae</taxon>
        <taxon>Dictyostelium</taxon>
    </lineage>
</organism>
<feature type="signal peptide" evidence="1">
    <location>
        <begin position="1"/>
        <end position="21"/>
    </location>
</feature>
<feature type="chain" id="PRO_0000327559" description="Protein psiJ">
    <location>
        <begin position="22"/>
        <end position="719"/>
    </location>
</feature>
<feature type="topological domain" description="Extracellular" evidence="1">
    <location>
        <begin position="22"/>
        <end position="653"/>
    </location>
</feature>
<feature type="transmembrane region" description="Helical" evidence="1">
    <location>
        <begin position="654"/>
        <end position="674"/>
    </location>
</feature>
<feature type="topological domain" description="Cytoplasmic" evidence="1">
    <location>
        <begin position="675"/>
        <end position="719"/>
    </location>
</feature>
<feature type="domain" description="PA14" evidence="2">
    <location>
        <begin position="112"/>
        <end position="260"/>
    </location>
</feature>
<feature type="glycosylation site" description="N-linked (GlcNAc...) asparagine" evidence="1">
    <location>
        <position position="46"/>
    </location>
</feature>
<feature type="glycosylation site" description="N-linked (GlcNAc...) asparagine" evidence="1">
    <location>
        <position position="59"/>
    </location>
</feature>
<feature type="glycosylation site" description="N-linked (GlcNAc...) asparagine" evidence="1">
    <location>
        <position position="86"/>
    </location>
</feature>
<feature type="glycosylation site" description="N-linked (GlcNAc...) asparagine" evidence="1">
    <location>
        <position position="113"/>
    </location>
</feature>
<feature type="glycosylation site" description="N-linked (GlcNAc...) asparagine" evidence="1">
    <location>
        <position position="301"/>
    </location>
</feature>
<feature type="glycosylation site" description="N-linked (GlcNAc...) asparagine" evidence="1">
    <location>
        <position position="372"/>
    </location>
</feature>
<feature type="glycosylation site" description="N-linked (GlcNAc...) asparagine" evidence="1">
    <location>
        <position position="435"/>
    </location>
</feature>
<feature type="glycosylation site" description="N-linked (GlcNAc...) asparagine" evidence="1">
    <location>
        <position position="457"/>
    </location>
</feature>
<feature type="glycosylation site" description="N-linked (GlcNAc...) asparagine" evidence="1">
    <location>
        <position position="562"/>
    </location>
</feature>
<feature type="glycosylation site" description="N-linked (GlcNAc...) asparagine" evidence="1">
    <location>
        <position position="628"/>
    </location>
</feature>
<keyword id="KW-0325">Glycoprotein</keyword>
<keyword id="KW-0472">Membrane</keyword>
<keyword id="KW-1185">Reference proteome</keyword>
<keyword id="KW-0732">Signal</keyword>
<keyword id="KW-0812">Transmembrane</keyword>
<keyword id="KW-1133">Transmembrane helix</keyword>
<sequence length="719" mass="79170">MVSNLLKGLILFSLFISFLNGDDKIFPVTIRDLSPMTNPDFEIKNNNTLVKGIVKSKLNHSDRSPVYCCGDNHAPSNDAYNFVVHNQSTFHSWFHDVPGVNVPVLSKLVFKQNQTDPRVFYYETPSFFPIDDLGFKDPNYKGKKINEPNYMSKDKFAHNYHFCLEMHASFFYIGGEEFNFKGDDDVWVFINDDLVIDLGAPHTAESASVDLDKLGLIKGKSYNFDFFYCERHTTESYIHISTSIDLECKWKDYCGVCEGTGKCCDVSQCTGSLSPCGSWECPPPNIGTKEWKYNCIMKEPNCTLLDTMCTSYECNAISKTCEPRENVDPCAYTNSCEKKVCSEELGGCYEVEKKCYSEAFSDPTCYELPCVNGTCTVNRLCDIPDKCIISTCIEGNGCSHLKKQCSDKDYCTIDSCSSITGECFFDRVKDCQPCNETLCATDESNLCVRTECNPYDNSTCNEIKLVDCDDGNLCTNDICDPATGKCSNLPVVCEIKDACNKPQCDMVTGKCIVTDNCNDNNICSDDSCSLDGTCIHTKKNCDDGNKCTNDFCKVDIGCVHSNITCESSSVCMVASCDSNKGCIESPIVCPSSAFCLVAQCDVGYGGCNQYDKVCIPDDPHCQYGICDNSTKKCTFKDFDPLPFRCQSVAVKAGVIGGAAIAGVVVGGAVALGLALFGAKAGYNHWMSLKNNQMATSSVNPLYEPSPHQGTNPLWEAPPT</sequence>
<name>PSIJ_DICDI</name>
<dbReference type="EMBL" id="AAFI02000162">
    <property type="protein sequence ID" value="EAL62285.1"/>
    <property type="molecule type" value="Genomic_DNA"/>
</dbReference>
<dbReference type="RefSeq" id="XP_635798.1">
    <property type="nucleotide sequence ID" value="XM_630706.1"/>
</dbReference>
<dbReference type="FunCoup" id="Q54G85">
    <property type="interactions" value="12"/>
</dbReference>
<dbReference type="GlyCosmos" id="Q54G85">
    <property type="glycosylation" value="10 sites, No reported glycans"/>
</dbReference>
<dbReference type="GlyGen" id="Q54G85">
    <property type="glycosylation" value="10 sites"/>
</dbReference>
<dbReference type="PaxDb" id="44689-DDB0232407"/>
<dbReference type="EnsemblProtists" id="EAL62285">
    <property type="protein sequence ID" value="EAL62285"/>
    <property type="gene ID" value="DDB_G0290317"/>
</dbReference>
<dbReference type="GeneID" id="8627603"/>
<dbReference type="KEGG" id="ddi:DDB_G0290317"/>
<dbReference type="dictyBase" id="DDB_G0290317">
    <property type="gene designation" value="psiJ"/>
</dbReference>
<dbReference type="VEuPathDB" id="AmoebaDB:DDB_G0290317"/>
<dbReference type="eggNOG" id="ENOG502STKH">
    <property type="taxonomic scope" value="Eukaryota"/>
</dbReference>
<dbReference type="HOGENOM" id="CLU_024170_0_0_1"/>
<dbReference type="InParanoid" id="Q54G85"/>
<dbReference type="OMA" id="LEMHASF"/>
<dbReference type="PhylomeDB" id="Q54G85"/>
<dbReference type="PRO" id="PR:Q54G85"/>
<dbReference type="Proteomes" id="UP000002195">
    <property type="component" value="Chromosome 5"/>
</dbReference>
<dbReference type="GO" id="GO:0005576">
    <property type="term" value="C:extracellular region"/>
    <property type="evidence" value="ECO:0000318"/>
    <property type="project" value="GO_Central"/>
</dbReference>
<dbReference type="GO" id="GO:0016020">
    <property type="term" value="C:membrane"/>
    <property type="evidence" value="ECO:0007669"/>
    <property type="project" value="UniProtKB-SubCell"/>
</dbReference>
<dbReference type="InterPro" id="IPR011874">
    <property type="entry name" value="Fibro_Slime"/>
</dbReference>
<dbReference type="InterPro" id="IPR037524">
    <property type="entry name" value="PA14/GLEYA"/>
</dbReference>
<dbReference type="InterPro" id="IPR011658">
    <property type="entry name" value="PA14_dom"/>
</dbReference>
<dbReference type="InterPro" id="IPR051154">
    <property type="entry name" value="Prespore-cell_inducing_factor"/>
</dbReference>
<dbReference type="InterPro" id="IPR001673">
    <property type="entry name" value="S_mold_repeat"/>
</dbReference>
<dbReference type="NCBIfam" id="TIGR02148">
    <property type="entry name" value="Fibro_Slime"/>
    <property type="match status" value="1"/>
</dbReference>
<dbReference type="PANTHER" id="PTHR31137:SF12">
    <property type="entry name" value="PA14 DOMAIN-CONTAINING PROTEIN-RELATED"/>
    <property type="match status" value="1"/>
</dbReference>
<dbReference type="PANTHER" id="PTHR31137">
    <property type="entry name" value="PROTEIN PSIB-RELATED-RELATED"/>
    <property type="match status" value="1"/>
</dbReference>
<dbReference type="Pfam" id="PF00526">
    <property type="entry name" value="Dicty_CTDC"/>
    <property type="match status" value="4"/>
</dbReference>
<dbReference type="Pfam" id="PF07691">
    <property type="entry name" value="PA14"/>
    <property type="match status" value="1"/>
</dbReference>
<dbReference type="SMART" id="SM00758">
    <property type="entry name" value="PA14"/>
    <property type="match status" value="1"/>
</dbReference>
<dbReference type="SUPFAM" id="SSF56988">
    <property type="entry name" value="Anthrax protective antigen"/>
    <property type="match status" value="1"/>
</dbReference>
<dbReference type="PROSITE" id="PS51820">
    <property type="entry name" value="PA14"/>
    <property type="match status" value="1"/>
</dbReference>
<proteinExistence type="inferred from homology"/>
<accession>Q54G85</accession>
<comment type="subcellular location">
    <subcellularLocation>
        <location evidence="3">Membrane</location>
        <topology evidence="3">Single-pass type I membrane protein</topology>
    </subcellularLocation>
</comment>
<comment type="similarity">
    <text evidence="3">Belongs to the prespore-cell-inducing factor family.</text>
</comment>
<gene>
    <name type="primary">psiJ</name>
    <name type="ORF">DDB_G0290317</name>
</gene>
<reference key="1">
    <citation type="journal article" date="2005" name="Nature">
        <title>The genome of the social amoeba Dictyostelium discoideum.</title>
        <authorList>
            <person name="Eichinger L."/>
            <person name="Pachebat J.A."/>
            <person name="Gloeckner G."/>
            <person name="Rajandream M.A."/>
            <person name="Sucgang R."/>
            <person name="Berriman M."/>
            <person name="Song J."/>
            <person name="Olsen R."/>
            <person name="Szafranski K."/>
            <person name="Xu Q."/>
            <person name="Tunggal B."/>
            <person name="Kummerfeld S."/>
            <person name="Madera M."/>
            <person name="Konfortov B.A."/>
            <person name="Rivero F."/>
            <person name="Bankier A.T."/>
            <person name="Lehmann R."/>
            <person name="Hamlin N."/>
            <person name="Davies R."/>
            <person name="Gaudet P."/>
            <person name="Fey P."/>
            <person name="Pilcher K."/>
            <person name="Chen G."/>
            <person name="Saunders D."/>
            <person name="Sodergren E.J."/>
            <person name="Davis P."/>
            <person name="Kerhornou A."/>
            <person name="Nie X."/>
            <person name="Hall N."/>
            <person name="Anjard C."/>
            <person name="Hemphill L."/>
            <person name="Bason N."/>
            <person name="Farbrother P."/>
            <person name="Desany B."/>
            <person name="Just E."/>
            <person name="Morio T."/>
            <person name="Rost R."/>
            <person name="Churcher C.M."/>
            <person name="Cooper J."/>
            <person name="Haydock S."/>
            <person name="van Driessche N."/>
            <person name="Cronin A."/>
            <person name="Goodhead I."/>
            <person name="Muzny D.M."/>
            <person name="Mourier T."/>
            <person name="Pain A."/>
            <person name="Lu M."/>
            <person name="Harper D."/>
            <person name="Lindsay R."/>
            <person name="Hauser H."/>
            <person name="James K.D."/>
            <person name="Quiles M."/>
            <person name="Madan Babu M."/>
            <person name="Saito T."/>
            <person name="Buchrieser C."/>
            <person name="Wardroper A."/>
            <person name="Felder M."/>
            <person name="Thangavelu M."/>
            <person name="Johnson D."/>
            <person name="Knights A."/>
            <person name="Loulseged H."/>
            <person name="Mungall K.L."/>
            <person name="Oliver K."/>
            <person name="Price C."/>
            <person name="Quail M.A."/>
            <person name="Urushihara H."/>
            <person name="Hernandez J."/>
            <person name="Rabbinowitsch E."/>
            <person name="Steffen D."/>
            <person name="Sanders M."/>
            <person name="Ma J."/>
            <person name="Kohara Y."/>
            <person name="Sharp S."/>
            <person name="Simmonds M.N."/>
            <person name="Spiegler S."/>
            <person name="Tivey A."/>
            <person name="Sugano S."/>
            <person name="White B."/>
            <person name="Walker D."/>
            <person name="Woodward J.R."/>
            <person name="Winckler T."/>
            <person name="Tanaka Y."/>
            <person name="Shaulsky G."/>
            <person name="Schleicher M."/>
            <person name="Weinstock G.M."/>
            <person name="Rosenthal A."/>
            <person name="Cox E.C."/>
            <person name="Chisholm R.L."/>
            <person name="Gibbs R.A."/>
            <person name="Loomis W.F."/>
            <person name="Platzer M."/>
            <person name="Kay R.R."/>
            <person name="Williams J.G."/>
            <person name="Dear P.H."/>
            <person name="Noegel A.A."/>
            <person name="Barrell B.G."/>
            <person name="Kuspa A."/>
        </authorList>
    </citation>
    <scope>NUCLEOTIDE SEQUENCE [LARGE SCALE GENOMIC DNA]</scope>
    <source>
        <strain>AX4</strain>
    </source>
</reference>